<sequence length="1059" mass="111077">MEANPAGSGAGGGGSSGIGGEDGVHFQSYPFDFLEFLNHQRFEPMELYGEHAKAVAALPCAPGPPPQPPPQPPPPQYDYPPQSTFKPKAEVPSSSSSSSSSSSSSSSSSSSSSSSSSQAKKPDPPLPPAFGAPPPPLFDAAFPTPQWGIVDLSGHQHLFGNLKRGGPASGPGVTPGLGAPAGAPGPLPAPSQTPPGPPAAAACDPTKDDKGYFRRLKYLMERRFPCGVCQKSFKQSSHLVQHMLVHSGERPYECGVCGRTYNHVSSLIRHRRCHKDVPPAAGGPPQPGPHLPPLGLPAPAASAATAAAPSTVSSGPPATPVAPAPSADGSAAPAGVGVPPPATGGGDGPFACPLCWKVFKKPSHLHQHQIIHTGEKPFSCSVCSKSFNRRESLKRHVKTHSADLLRLPCGICGKAFRDASYLLKHQAAHAGAGAGGPRPVYPCDLCGKSYSAPQSLLRHKAAHAPPAAAAEAPKDGAASAPQPPPTFPPGPYLLPPDPPTTDSEKAAAAAAAVVYGAVPVPLLGAHPLLLGGAGTSGAGGSGASVPGKTFCCGICGRGFGRRETLKRHERIHTGEKPHQCPVCGKRFRESFHLSKHHVVHTRERPYKCELCGKVFGYPQSLTRHRQVHRLQLPCALAGAAGLPSTQGTPGACGPGASGTSAGPTDGLSYACSDCGEHFPDLFHVMSHKEVHMAEKPYGCDACGKTFGFIENLMWHKLVHQAAPERLLPPAPGGLQPPDGSSGTDAASVLDNGLAGEVGAAVAALAGVSGGEDAGGAAVAGAGGGASSGPERFSCATCGQSFKHFLGLVTHKYVHLVRRTLGCGLCGQSFAGAYDLLLHRRSHRQKRGFRCPVCGKRFWEAALLMRHQRCHTEQRPYRCGVCGRGFLRSWYLRQHRVVHTGERAFKCGVCAKRFAQSSSLAEHRRLHAVARPQRCSACGKTFRYRSNLLEHQRLHLGERAYRCEHCGKGFFYLSSVLRHQRAHEPPRPELRCPACLKAFKDPGYFRKHLAAHQGGRPFRCSSCGEGFANTYGLKKHRLAHKAENLGGPGAGAGTLAGKDA</sequence>
<accession>P0CJ78</accession>
<name>ZN865_HUMAN</name>
<feature type="chain" id="PRO_0000404594" description="Zinc finger protein 865">
    <location>
        <begin position="1"/>
        <end position="1059"/>
    </location>
</feature>
<feature type="zinc finger region" description="C2H2-type 1" evidence="2">
    <location>
        <begin position="224"/>
        <end position="246"/>
    </location>
</feature>
<feature type="zinc finger region" description="C2H2-type 2" evidence="2">
    <location>
        <begin position="252"/>
        <end position="274"/>
    </location>
</feature>
<feature type="zinc finger region" description="C2H2-type 3" evidence="2">
    <location>
        <begin position="350"/>
        <end position="372"/>
    </location>
</feature>
<feature type="zinc finger region" description="C2H2-type 4" evidence="2">
    <location>
        <begin position="378"/>
        <end position="400"/>
    </location>
</feature>
<feature type="zinc finger region" description="C2H2-type 5" evidence="2">
    <location>
        <begin position="407"/>
        <end position="429"/>
    </location>
</feature>
<feature type="zinc finger region" description="C2H2-type 6" evidence="2">
    <location>
        <begin position="441"/>
        <end position="463"/>
    </location>
</feature>
<feature type="zinc finger region" description="C2H2-type 7" evidence="2">
    <location>
        <begin position="550"/>
        <end position="572"/>
    </location>
</feature>
<feature type="zinc finger region" description="C2H2-type 8" evidence="2">
    <location>
        <begin position="578"/>
        <end position="600"/>
    </location>
</feature>
<feature type="zinc finger region" description="C2H2-type 9" evidence="2">
    <location>
        <begin position="606"/>
        <end position="628"/>
    </location>
</feature>
<feature type="zinc finger region" description="C2H2-type 10" evidence="2">
    <location>
        <begin position="669"/>
        <end position="691"/>
    </location>
</feature>
<feature type="zinc finger region" description="C2H2-type 11" evidence="2">
    <location>
        <begin position="697"/>
        <end position="719"/>
    </location>
</feature>
<feature type="zinc finger region" description="C2H2-type 12" evidence="2">
    <location>
        <begin position="792"/>
        <end position="814"/>
    </location>
</feature>
<feature type="zinc finger region" description="C2H2-type 13" evidence="2">
    <location>
        <begin position="820"/>
        <end position="842"/>
    </location>
</feature>
<feature type="zinc finger region" description="C2H2-type 14" evidence="2">
    <location>
        <begin position="848"/>
        <end position="870"/>
    </location>
</feature>
<feature type="zinc finger region" description="C2H2-type 15" evidence="2">
    <location>
        <begin position="876"/>
        <end position="898"/>
    </location>
</feature>
<feature type="zinc finger region" description="C2H2-type 16" evidence="2">
    <location>
        <begin position="904"/>
        <end position="926"/>
    </location>
</feature>
<feature type="zinc finger region" description="C2H2-type 17" evidence="2">
    <location>
        <begin position="932"/>
        <end position="954"/>
    </location>
</feature>
<feature type="zinc finger region" description="C2H2-type 18" evidence="2">
    <location>
        <begin position="960"/>
        <end position="982"/>
    </location>
</feature>
<feature type="zinc finger region" description="C2H2-type 19" evidence="2">
    <location>
        <begin position="989"/>
        <end position="1011"/>
    </location>
</feature>
<feature type="zinc finger region" description="C2H2-type 20" evidence="2">
    <location>
        <begin position="1017"/>
        <end position="1039"/>
    </location>
</feature>
<feature type="region of interest" description="Disordered" evidence="3">
    <location>
        <begin position="1"/>
        <end position="24"/>
    </location>
</feature>
<feature type="region of interest" description="Disordered" evidence="3">
    <location>
        <begin position="58"/>
        <end position="142"/>
    </location>
</feature>
<feature type="region of interest" description="Disordered" evidence="3">
    <location>
        <begin position="161"/>
        <end position="206"/>
    </location>
</feature>
<feature type="region of interest" description="Disordered" evidence="3">
    <location>
        <begin position="275"/>
        <end position="342"/>
    </location>
</feature>
<feature type="region of interest" description="Disordered" evidence="3">
    <location>
        <begin position="461"/>
        <end position="503"/>
    </location>
</feature>
<feature type="region of interest" description="Disordered" evidence="3">
    <location>
        <begin position="726"/>
        <end position="747"/>
    </location>
</feature>
<feature type="compositionally biased region" description="Gly residues" evidence="3">
    <location>
        <begin position="8"/>
        <end position="21"/>
    </location>
</feature>
<feature type="compositionally biased region" description="Pro residues" evidence="3">
    <location>
        <begin position="61"/>
        <end position="78"/>
    </location>
</feature>
<feature type="compositionally biased region" description="Low complexity" evidence="3">
    <location>
        <begin position="93"/>
        <end position="119"/>
    </location>
</feature>
<feature type="compositionally biased region" description="Pro residues" evidence="3">
    <location>
        <begin position="124"/>
        <end position="137"/>
    </location>
</feature>
<feature type="compositionally biased region" description="Pro residues" evidence="3">
    <location>
        <begin position="183"/>
        <end position="198"/>
    </location>
</feature>
<feature type="compositionally biased region" description="Pro residues" evidence="3">
    <location>
        <begin position="281"/>
        <end position="296"/>
    </location>
</feature>
<feature type="compositionally biased region" description="Low complexity" evidence="3">
    <location>
        <begin position="297"/>
        <end position="316"/>
    </location>
</feature>
<feature type="compositionally biased region" description="Low complexity" evidence="3">
    <location>
        <begin position="324"/>
        <end position="337"/>
    </location>
</feature>
<feature type="compositionally biased region" description="Low complexity" evidence="3">
    <location>
        <begin position="463"/>
        <end position="480"/>
    </location>
</feature>
<feature type="compositionally biased region" description="Pro residues" evidence="3">
    <location>
        <begin position="481"/>
        <end position="499"/>
    </location>
</feature>
<feature type="cross-link" description="Glycyl lysine isopeptide (Lys-Gly) (interchain with G-Cter in SUMO2)" evidence="5">
    <location>
        <position position="802"/>
    </location>
</feature>
<feature type="cross-link" description="Glycyl lysine isopeptide (Lys-Gly) (interchain with G-Cter in SUMO2)" evidence="5">
    <location>
        <position position="1040"/>
    </location>
</feature>
<proteinExistence type="evidence at protein level"/>
<dbReference type="EMBL" id="AC008735">
    <property type="status" value="NOT_ANNOTATED_CDS"/>
    <property type="molecule type" value="Genomic_DNA"/>
</dbReference>
<dbReference type="CCDS" id="CCDS58681.1"/>
<dbReference type="RefSeq" id="NP_001182534.1">
    <property type="nucleotide sequence ID" value="NM_001195605.2"/>
</dbReference>
<dbReference type="SMR" id="P0CJ78"/>
<dbReference type="BioGRID" id="936163">
    <property type="interactions" value="47"/>
</dbReference>
<dbReference type="FunCoup" id="P0CJ78">
    <property type="interactions" value="709"/>
</dbReference>
<dbReference type="IntAct" id="P0CJ78">
    <property type="interactions" value="41"/>
</dbReference>
<dbReference type="STRING" id="9606.ENSP00000457715"/>
<dbReference type="GlyGen" id="P0CJ78">
    <property type="glycosylation" value="7 sites, 1 O-linked glycan (2 sites)"/>
</dbReference>
<dbReference type="iPTMnet" id="P0CJ78"/>
<dbReference type="PhosphoSitePlus" id="P0CJ78"/>
<dbReference type="BioMuta" id="ZNF865"/>
<dbReference type="DMDM" id="322967615"/>
<dbReference type="jPOST" id="P0CJ78"/>
<dbReference type="MassIVE" id="P0CJ78"/>
<dbReference type="PaxDb" id="9606-ENSP00000483134"/>
<dbReference type="PeptideAtlas" id="P0CJ78"/>
<dbReference type="ProteomicsDB" id="52492"/>
<dbReference type="Pumba" id="P0CJ78"/>
<dbReference type="Antibodypedia" id="69405">
    <property type="antibodies" value="38 antibodies from 11 providers"/>
</dbReference>
<dbReference type="DNASU" id="100507290"/>
<dbReference type="Ensembl" id="ENST00000568956.2">
    <property type="protein sequence ID" value="ENSP00000457715.1"/>
    <property type="gene ID" value="ENSG00000261221.5"/>
</dbReference>
<dbReference type="GeneID" id="100507290"/>
<dbReference type="KEGG" id="hsa:100507290"/>
<dbReference type="MANE-Select" id="ENST00000568956.2">
    <property type="protein sequence ID" value="ENSP00000457715.1"/>
    <property type="RefSeq nucleotide sequence ID" value="NM_001195605.2"/>
    <property type="RefSeq protein sequence ID" value="NP_001182534.1"/>
</dbReference>
<dbReference type="UCSC" id="uc061dbu.1">
    <property type="organism name" value="human"/>
</dbReference>
<dbReference type="AGR" id="HGNC:38705"/>
<dbReference type="CTD" id="100507290"/>
<dbReference type="GeneCards" id="ZNF865"/>
<dbReference type="HGNC" id="HGNC:38705">
    <property type="gene designation" value="ZNF865"/>
</dbReference>
<dbReference type="HPA" id="ENSG00000261221">
    <property type="expression patterns" value="Tissue enhanced (skeletal)"/>
</dbReference>
<dbReference type="neXtProt" id="NX_P0CJ78"/>
<dbReference type="OpenTargets" id="ENSG00000261221"/>
<dbReference type="VEuPathDB" id="HostDB:ENSG00000261221"/>
<dbReference type="eggNOG" id="KOG1721">
    <property type="taxonomic scope" value="Eukaryota"/>
</dbReference>
<dbReference type="GeneTree" id="ENSGT00530000064557"/>
<dbReference type="HOGENOM" id="CLU_010472_0_0_1"/>
<dbReference type="InParanoid" id="P0CJ78"/>
<dbReference type="OMA" id="SHKEVHM"/>
<dbReference type="OrthoDB" id="654211at2759"/>
<dbReference type="PAN-GO" id="P0CJ78">
    <property type="GO annotations" value="3 GO annotations based on evolutionary models"/>
</dbReference>
<dbReference type="PhylomeDB" id="P0CJ78"/>
<dbReference type="TreeFam" id="TF350857"/>
<dbReference type="PathwayCommons" id="P0CJ78"/>
<dbReference type="SignaLink" id="P0CJ78"/>
<dbReference type="BioGRID-ORCS" id="100507290">
    <property type="hits" value="12 hits in 1176 CRISPR screens"/>
</dbReference>
<dbReference type="GenomeRNAi" id="100507290"/>
<dbReference type="Pharos" id="P0CJ78">
    <property type="development level" value="Tdark"/>
</dbReference>
<dbReference type="PRO" id="PR:P0CJ78"/>
<dbReference type="Proteomes" id="UP000005640">
    <property type="component" value="Chromosome 19"/>
</dbReference>
<dbReference type="RNAct" id="P0CJ78">
    <property type="molecule type" value="protein"/>
</dbReference>
<dbReference type="Bgee" id="ENSG00000261221">
    <property type="expression patterns" value="Expressed in gastrocnemius and 109 other cell types or tissues"/>
</dbReference>
<dbReference type="ExpressionAtlas" id="P0CJ78">
    <property type="expression patterns" value="baseline and differential"/>
</dbReference>
<dbReference type="GO" id="GO:0005634">
    <property type="term" value="C:nucleus"/>
    <property type="evidence" value="ECO:0007669"/>
    <property type="project" value="UniProtKB-SubCell"/>
</dbReference>
<dbReference type="GO" id="GO:0003700">
    <property type="term" value="F:DNA-binding transcription factor activity"/>
    <property type="evidence" value="ECO:0000318"/>
    <property type="project" value="GO_Central"/>
</dbReference>
<dbReference type="GO" id="GO:0000978">
    <property type="term" value="F:RNA polymerase II cis-regulatory region sequence-specific DNA binding"/>
    <property type="evidence" value="ECO:0000318"/>
    <property type="project" value="GO_Central"/>
</dbReference>
<dbReference type="GO" id="GO:0008270">
    <property type="term" value="F:zinc ion binding"/>
    <property type="evidence" value="ECO:0007669"/>
    <property type="project" value="UniProtKB-KW"/>
</dbReference>
<dbReference type="GO" id="GO:0006357">
    <property type="term" value="P:regulation of transcription by RNA polymerase II"/>
    <property type="evidence" value="ECO:0000318"/>
    <property type="project" value="GO_Central"/>
</dbReference>
<dbReference type="FunFam" id="3.30.160.60:FF:000045">
    <property type="entry name" value="ZFP69 zinc finger protein B"/>
    <property type="match status" value="1"/>
</dbReference>
<dbReference type="FunFam" id="3.30.160.60:FF:000100">
    <property type="entry name" value="Zinc finger 45-like"/>
    <property type="match status" value="1"/>
</dbReference>
<dbReference type="FunFam" id="3.30.160.60:FF:000557">
    <property type="entry name" value="zinc finger and SCAN domain-containing protein 29"/>
    <property type="match status" value="1"/>
</dbReference>
<dbReference type="FunFam" id="3.30.160.60:FF:000446">
    <property type="entry name" value="Zinc finger protein"/>
    <property type="match status" value="2"/>
</dbReference>
<dbReference type="FunFam" id="3.30.160.60:FF:001228">
    <property type="entry name" value="Zinc finger protein 236"/>
    <property type="match status" value="1"/>
</dbReference>
<dbReference type="FunFam" id="3.30.160.60:FF:002343">
    <property type="entry name" value="Zinc finger protein 33A"/>
    <property type="match status" value="1"/>
</dbReference>
<dbReference type="FunFam" id="3.30.160.60:FF:000145">
    <property type="entry name" value="Zinc finger protein 574"/>
    <property type="match status" value="1"/>
</dbReference>
<dbReference type="FunFam" id="3.30.160.60:FF:000624">
    <property type="entry name" value="zinc finger protein 697"/>
    <property type="match status" value="2"/>
</dbReference>
<dbReference type="FunFam" id="3.30.160.60:FF:000710">
    <property type="entry name" value="Zinc finger protein 768"/>
    <property type="match status" value="1"/>
</dbReference>
<dbReference type="FunFam" id="3.30.160.60:FF:000634">
    <property type="entry name" value="Zinc finger X-chromosomal protein"/>
    <property type="match status" value="1"/>
</dbReference>
<dbReference type="Gene3D" id="3.30.160.60">
    <property type="entry name" value="Classic Zinc Finger"/>
    <property type="match status" value="17"/>
</dbReference>
<dbReference type="InterPro" id="IPR050636">
    <property type="entry name" value="C2H2-ZF_domain-containing"/>
</dbReference>
<dbReference type="InterPro" id="IPR036236">
    <property type="entry name" value="Znf_C2H2_sf"/>
</dbReference>
<dbReference type="InterPro" id="IPR013087">
    <property type="entry name" value="Znf_C2H2_type"/>
</dbReference>
<dbReference type="PANTHER" id="PTHR47772:SF13">
    <property type="entry name" value="GASTRULA ZINC FINGER PROTEIN XLCGF49.1-LIKE-RELATED"/>
    <property type="match status" value="1"/>
</dbReference>
<dbReference type="PANTHER" id="PTHR47772">
    <property type="entry name" value="ZINC FINGER PROTEIN 200"/>
    <property type="match status" value="1"/>
</dbReference>
<dbReference type="Pfam" id="PF00096">
    <property type="entry name" value="zf-C2H2"/>
    <property type="match status" value="10"/>
</dbReference>
<dbReference type="Pfam" id="PF13912">
    <property type="entry name" value="zf-C2H2_6"/>
    <property type="match status" value="3"/>
</dbReference>
<dbReference type="SMART" id="SM00355">
    <property type="entry name" value="ZnF_C2H2"/>
    <property type="match status" value="20"/>
</dbReference>
<dbReference type="SUPFAM" id="SSF57667">
    <property type="entry name" value="beta-beta-alpha zinc fingers"/>
    <property type="match status" value="11"/>
</dbReference>
<dbReference type="PROSITE" id="PS00028">
    <property type="entry name" value="ZINC_FINGER_C2H2_1"/>
    <property type="match status" value="20"/>
</dbReference>
<dbReference type="PROSITE" id="PS50157">
    <property type="entry name" value="ZINC_FINGER_C2H2_2"/>
    <property type="match status" value="20"/>
</dbReference>
<evidence type="ECO:0000250" key="1"/>
<evidence type="ECO:0000255" key="2">
    <source>
        <dbReference type="PROSITE-ProRule" id="PRU00042"/>
    </source>
</evidence>
<evidence type="ECO:0000256" key="3">
    <source>
        <dbReference type="SAM" id="MobiDB-lite"/>
    </source>
</evidence>
<evidence type="ECO:0000305" key="4"/>
<evidence type="ECO:0007744" key="5">
    <source>
    </source>
</evidence>
<comment type="function">
    <text evidence="1">May be involved in transcriptional regulation.</text>
</comment>
<comment type="subcellular location">
    <subcellularLocation>
        <location evidence="1">Nucleus</location>
    </subcellularLocation>
</comment>
<comment type="similarity">
    <text evidence="4">Belongs to the krueppel C2H2-type zinc-finger protein family.</text>
</comment>
<keyword id="KW-0238">DNA-binding</keyword>
<keyword id="KW-1017">Isopeptide bond</keyword>
<keyword id="KW-0479">Metal-binding</keyword>
<keyword id="KW-0539">Nucleus</keyword>
<keyword id="KW-1267">Proteomics identification</keyword>
<keyword id="KW-1185">Reference proteome</keyword>
<keyword id="KW-0677">Repeat</keyword>
<keyword id="KW-0804">Transcription</keyword>
<keyword id="KW-0805">Transcription regulation</keyword>
<keyword id="KW-0832">Ubl conjugation</keyword>
<keyword id="KW-0862">Zinc</keyword>
<keyword id="KW-0863">Zinc-finger</keyword>
<reference key="1">
    <citation type="journal article" date="2004" name="Nature">
        <title>The DNA sequence and biology of human chromosome 19.</title>
        <authorList>
            <person name="Grimwood J."/>
            <person name="Gordon L.A."/>
            <person name="Olsen A.S."/>
            <person name="Terry A."/>
            <person name="Schmutz J."/>
            <person name="Lamerdin J.E."/>
            <person name="Hellsten U."/>
            <person name="Goodstein D."/>
            <person name="Couronne O."/>
            <person name="Tran-Gyamfi M."/>
            <person name="Aerts A."/>
            <person name="Altherr M."/>
            <person name="Ashworth L."/>
            <person name="Bajorek E."/>
            <person name="Black S."/>
            <person name="Branscomb E."/>
            <person name="Caenepeel S."/>
            <person name="Carrano A.V."/>
            <person name="Caoile C."/>
            <person name="Chan Y.M."/>
            <person name="Christensen M."/>
            <person name="Cleland C.A."/>
            <person name="Copeland A."/>
            <person name="Dalin E."/>
            <person name="Dehal P."/>
            <person name="Denys M."/>
            <person name="Detter J.C."/>
            <person name="Escobar J."/>
            <person name="Flowers D."/>
            <person name="Fotopulos D."/>
            <person name="Garcia C."/>
            <person name="Georgescu A.M."/>
            <person name="Glavina T."/>
            <person name="Gomez M."/>
            <person name="Gonzales E."/>
            <person name="Groza M."/>
            <person name="Hammon N."/>
            <person name="Hawkins T."/>
            <person name="Haydu L."/>
            <person name="Ho I."/>
            <person name="Huang W."/>
            <person name="Israni S."/>
            <person name="Jett J."/>
            <person name="Kadner K."/>
            <person name="Kimball H."/>
            <person name="Kobayashi A."/>
            <person name="Larionov V."/>
            <person name="Leem S.-H."/>
            <person name="Lopez F."/>
            <person name="Lou Y."/>
            <person name="Lowry S."/>
            <person name="Malfatti S."/>
            <person name="Martinez D."/>
            <person name="McCready P.M."/>
            <person name="Medina C."/>
            <person name="Morgan J."/>
            <person name="Nelson K."/>
            <person name="Nolan M."/>
            <person name="Ovcharenko I."/>
            <person name="Pitluck S."/>
            <person name="Pollard M."/>
            <person name="Popkie A.P."/>
            <person name="Predki P."/>
            <person name="Quan G."/>
            <person name="Ramirez L."/>
            <person name="Rash S."/>
            <person name="Retterer J."/>
            <person name="Rodriguez A."/>
            <person name="Rogers S."/>
            <person name="Salamov A."/>
            <person name="Salazar A."/>
            <person name="She X."/>
            <person name="Smith D."/>
            <person name="Slezak T."/>
            <person name="Solovyev V."/>
            <person name="Thayer N."/>
            <person name="Tice H."/>
            <person name="Tsai M."/>
            <person name="Ustaszewska A."/>
            <person name="Vo N."/>
            <person name="Wagner M."/>
            <person name="Wheeler J."/>
            <person name="Wu K."/>
            <person name="Xie G."/>
            <person name="Yang J."/>
            <person name="Dubchak I."/>
            <person name="Furey T.S."/>
            <person name="DeJong P."/>
            <person name="Dickson M."/>
            <person name="Gordon D."/>
            <person name="Eichler E.E."/>
            <person name="Pennacchio L.A."/>
            <person name="Richardson P."/>
            <person name="Stubbs L."/>
            <person name="Rokhsar D.S."/>
            <person name="Myers R.M."/>
            <person name="Rubin E.M."/>
            <person name="Lucas S.M."/>
        </authorList>
    </citation>
    <scope>NUCLEOTIDE SEQUENCE [LARGE SCALE GENOMIC DNA]</scope>
</reference>
<reference key="2">
    <citation type="journal article" date="2017" name="Nat. Struct. Mol. Biol.">
        <title>Site-specific mapping of the human SUMO proteome reveals co-modification with phosphorylation.</title>
        <authorList>
            <person name="Hendriks I.A."/>
            <person name="Lyon D."/>
            <person name="Young C."/>
            <person name="Jensen L.J."/>
            <person name="Vertegaal A.C."/>
            <person name="Nielsen M.L."/>
        </authorList>
    </citation>
    <scope>SUMOYLATION [LARGE SCALE ANALYSIS] AT LYS-802 AND LYS-1040</scope>
    <scope>IDENTIFICATION BY MASS SPECTROMETRY [LARGE SCALE ANALYSIS]</scope>
</reference>
<gene>
    <name type="primary">ZNF865</name>
</gene>
<protein>
    <recommendedName>
        <fullName>Zinc finger protein 865</fullName>
    </recommendedName>
</protein>
<organism>
    <name type="scientific">Homo sapiens</name>
    <name type="common">Human</name>
    <dbReference type="NCBI Taxonomy" id="9606"/>
    <lineage>
        <taxon>Eukaryota</taxon>
        <taxon>Metazoa</taxon>
        <taxon>Chordata</taxon>
        <taxon>Craniata</taxon>
        <taxon>Vertebrata</taxon>
        <taxon>Euteleostomi</taxon>
        <taxon>Mammalia</taxon>
        <taxon>Eutheria</taxon>
        <taxon>Euarchontoglires</taxon>
        <taxon>Primates</taxon>
        <taxon>Haplorrhini</taxon>
        <taxon>Catarrhini</taxon>
        <taxon>Hominidae</taxon>
        <taxon>Homo</taxon>
    </lineage>
</organism>